<name>SPIC_SALT1</name>
<feature type="chain" id="PRO_0000410496" description="Salmonella pathogenicity island 2 protein C">
    <location>
        <begin position="1"/>
        <end position="133"/>
    </location>
</feature>
<proteinExistence type="evidence at protein level"/>
<accession>D0ZWR8</accession>
<accession>P74863</accession>
<gene>
    <name type="primary">spiC</name>
    <name type="synonym">ssaB</name>
    <name type="ordered locus">STM14_1688</name>
</gene>
<organism>
    <name type="scientific">Salmonella typhimurium (strain 14028s / SGSC 2262)</name>
    <dbReference type="NCBI Taxonomy" id="588858"/>
    <lineage>
        <taxon>Bacteria</taxon>
        <taxon>Pseudomonadati</taxon>
        <taxon>Pseudomonadota</taxon>
        <taxon>Gammaproteobacteria</taxon>
        <taxon>Enterobacterales</taxon>
        <taxon>Enterobacteriaceae</taxon>
        <taxon>Salmonella</taxon>
    </lineage>
</organism>
<evidence type="ECO:0000269" key="1">
    <source>
    </source>
</evidence>
<evidence type="ECO:0000269" key="2">
    <source>
    </source>
</evidence>
<evidence type="ECO:0000269" key="3">
    <source>
    </source>
</evidence>
<evidence type="ECO:0000269" key="4">
    <source>
    </source>
</evidence>
<sequence length="133" mass="14656">MSEEGFMLAVLKGIPLIQDIRAEGNSRSWIMTIDGHPARGEIFSEAFSISLFLNDLESLPKPCLAYVTLLLAAHPDVHDYAIQLTADGGWLNGYYTTSSSSELIAIEIEKHLALTCILKNVIRNHHKLYSGGV</sequence>
<protein>
    <recommendedName>
        <fullName>Salmonella pathogenicity island 2 protein C</fullName>
    </recommendedName>
    <alternativeName>
        <fullName>Secretion system apparatus protein B</fullName>
    </alternativeName>
</protein>
<comment type="function">
    <text evidence="1 4">Virulence protein that plays a central role in mammalian macrophage infection, by inhibiting phagosome-lysosome fusion and cellular trafficking, including trafficking of organelles that are devoid of Salmonella. May act by disrupting the function of the mammalian HOOK3 protein, a protein involved in the cellular traffic. Also required for actin ADP-ribosylase SpvB activity.</text>
</comment>
<comment type="subunit">
    <text evidence="2 3">Interacts with the mammalian NIPSNAP3A and HOOK3 proteins in infected cells.</text>
</comment>
<comment type="subcellular location">
    <subcellularLocation>
        <location evidence="1">Secreted</location>
    </subcellularLocation>
    <subcellularLocation>
        <location evidence="1">Cytoplasm</location>
    </subcellularLocation>
    <text>Translocated into the cytosol of macrophages via the Salmonella pathogenicity island 2 (SPI-2) type III secretion system that functions intracellularly to translocate proteins across the phagosomal membrane. Cytoplasmic in infected macrophages.</text>
</comment>
<comment type="induction">
    <text evidence="1">Protein levels in intracellular macrophage host increase with infection time (at protein level).</text>
</comment>
<comment type="disruption phenotype">
    <text evidence="1 4">Does not survive in murine macrophages, although it can invade epithelial cells. Disruption restores host cell phagosome-lysosome fusion and host vesicular trafficking. Also prevents SpvB-induced F-actin depolymerization in human macrophages without affecting intra-bacterial SpvB protein levels.</text>
</comment>
<dbReference type="EMBL" id="U51927">
    <property type="protein sequence ID" value="AAC44300.1"/>
    <property type="molecule type" value="Genomic_DNA"/>
</dbReference>
<dbReference type="EMBL" id="CP001363">
    <property type="protein sequence ID" value="ACY88166.1"/>
    <property type="molecule type" value="Genomic_DNA"/>
</dbReference>
<dbReference type="RefSeq" id="WP_001738217.1">
    <property type="nucleotide sequence ID" value="NZ_CP043402.1"/>
</dbReference>
<dbReference type="KEGG" id="seo:STM14_1688"/>
<dbReference type="PATRIC" id="fig|588858.6.peg.1623"/>
<dbReference type="HOGENOM" id="CLU_157272_0_0_6"/>
<dbReference type="BioCyc" id="SENT588858:STM14_RS07820-MONOMER"/>
<dbReference type="PHI-base" id="PHI:10123"/>
<dbReference type="PHI-base" id="PHI:2626"/>
<dbReference type="PHI-base" id="PHI:3759"/>
<dbReference type="Proteomes" id="UP000002695">
    <property type="component" value="Chromosome"/>
</dbReference>
<dbReference type="GO" id="GO:0005737">
    <property type="term" value="C:cytoplasm"/>
    <property type="evidence" value="ECO:0007669"/>
    <property type="project" value="UniProtKB-SubCell"/>
</dbReference>
<dbReference type="GO" id="GO:0005576">
    <property type="term" value="C:extracellular region"/>
    <property type="evidence" value="ECO:0007669"/>
    <property type="project" value="UniProtKB-SubCell"/>
</dbReference>
<dbReference type="GO" id="GO:0015031">
    <property type="term" value="P:protein transport"/>
    <property type="evidence" value="ECO:0007669"/>
    <property type="project" value="UniProtKB-KW"/>
</dbReference>
<dbReference type="NCBIfam" id="NF011895">
    <property type="entry name" value="PRK15368.1"/>
    <property type="match status" value="1"/>
</dbReference>
<keyword id="KW-0963">Cytoplasm</keyword>
<keyword id="KW-0653">Protein transport</keyword>
<keyword id="KW-0964">Secreted</keyword>
<keyword id="KW-0813">Transport</keyword>
<keyword id="KW-0843">Virulence</keyword>
<reference key="1">
    <citation type="journal article" date="1996" name="Proc. Natl. Acad. Sci. U.S.A.">
        <title>Identification of a pathogenicity island required for Salmonella survival in host cells.</title>
        <authorList>
            <person name="Ochman H."/>
            <person name="Soncini F.C."/>
            <person name="Solomon F."/>
            <person name="Groisman E.A."/>
        </authorList>
    </citation>
    <scope>NUCLEOTIDE SEQUENCE [GENOMIC DNA]</scope>
    <source>
        <strain>14028s / SGSC 2262</strain>
    </source>
</reference>
<reference key="2">
    <citation type="journal article" date="2010" name="J. Bacteriol.">
        <title>Short-term signatures of evolutionary change in the Salmonella enterica serovar typhimurium 14028 genome.</title>
        <authorList>
            <person name="Jarvik T."/>
            <person name="Smillie C."/>
            <person name="Groisman E.A."/>
            <person name="Ochman H."/>
        </authorList>
    </citation>
    <scope>NUCLEOTIDE SEQUENCE [LARGE SCALE GENOMIC DNA]</scope>
    <source>
        <strain>14028s / SGSC 2262</strain>
    </source>
</reference>
<reference key="3">
    <citation type="journal article" date="1999" name="EMBO J.">
        <title>A Salmonella virulence protein that inhibits cellular trafficking.</title>
        <authorList>
            <person name="Uchiya K."/>
            <person name="Barbieri M.A."/>
            <person name="Funato K."/>
            <person name="Shah A.H."/>
            <person name="Stahl P.D."/>
            <person name="Groisman E.A."/>
        </authorList>
    </citation>
    <scope>FUNCTION</scope>
    <scope>SUBCELLULAR LOCATION</scope>
    <scope>INDUCTION</scope>
    <scope>SECRETION VIA SPI2 TYPE III SECRETION SYSTEM</scope>
    <scope>DISRUPTION PHENOTYPE</scope>
    <source>
        <strain>14028s / SGSC 2262</strain>
    </source>
</reference>
<reference key="4">
    <citation type="journal article" date="2002" name="Cell. Microbiol.">
        <title>Identification of a NIPSNAP homologue as host cell target for Salmonella virulence protein SpiC.</title>
        <authorList>
            <person name="Lee A.H."/>
            <person name="Zareei M.P."/>
            <person name="Daefler S."/>
        </authorList>
    </citation>
    <scope>INTERACTION WITH NIPSNAP3A</scope>
    <source>
        <strain>14028s / SGSC 2262</strain>
    </source>
</reference>
<reference key="5">
    <citation type="journal article" date="2003" name="Mol. Microbiol.">
        <title>The Salmonella SpiC protein targets the mammalian Hook3 protein function to alter cellular trafficking.</title>
        <authorList>
            <person name="Shotland Y."/>
            <person name="Kraemer H."/>
            <person name="Groisman E.A."/>
        </authorList>
    </citation>
    <scope>INTERACTION WITH HOST HOOK3</scope>
    <source>
        <strain>14028s / SGSC 2262</strain>
    </source>
</reference>
<reference key="6">
    <citation type="journal article" date="2008" name="FEMS Immunol. Med. Microbiol.">
        <title>Identification of Salmonella SPI-2 secretion system components required for SpvB-mediated cytotoxicity in macrophages and virulence in mice.</title>
        <authorList>
            <person name="Browne S.H."/>
            <person name="Hasegawa P."/>
            <person name="Okamoto S."/>
            <person name="Fierer J."/>
            <person name="Guiney D.G."/>
        </authorList>
    </citation>
    <scope>FUNCTION IN SPVB ACTIVITY</scope>
    <scope>DISRUPTION PHENOTYPE</scope>
    <source>
        <strain>14028s / SGSC 2262</strain>
    </source>
</reference>